<organism>
    <name type="scientific">Escherichia coli (strain K12)</name>
    <dbReference type="NCBI Taxonomy" id="83333"/>
    <lineage>
        <taxon>Bacteria</taxon>
        <taxon>Pseudomonadati</taxon>
        <taxon>Pseudomonadota</taxon>
        <taxon>Gammaproteobacteria</taxon>
        <taxon>Enterobacterales</taxon>
        <taxon>Enterobacteriaceae</taxon>
        <taxon>Escherichia</taxon>
    </lineage>
</organism>
<feature type="chain" id="PRO_0000120352" description="Succinylornithine transaminase">
    <location>
        <begin position="1"/>
        <end position="406"/>
    </location>
</feature>
<feature type="modified residue" description="N6-(pyridoxal phosphate)lysine" evidence="1">
    <location>
        <position position="252"/>
    </location>
</feature>
<feature type="sequence conflict" description="In Ref. 1; AAB51148." evidence="4" ref="1">
    <original>A</original>
    <variation>R</variation>
    <location>
        <position position="361"/>
    </location>
</feature>
<feature type="helix" evidence="6">
    <location>
        <begin position="7"/>
        <end position="13"/>
    </location>
</feature>
<feature type="strand" evidence="6">
    <location>
        <begin position="25"/>
        <end position="30"/>
    </location>
</feature>
<feature type="strand" evidence="6">
    <location>
        <begin position="32"/>
        <end position="35"/>
    </location>
</feature>
<feature type="strand" evidence="6">
    <location>
        <begin position="40"/>
        <end position="45"/>
    </location>
</feature>
<feature type="helix" evidence="6">
    <location>
        <begin position="46"/>
        <end position="49"/>
    </location>
</feature>
<feature type="helix" evidence="6">
    <location>
        <begin position="58"/>
        <end position="68"/>
    </location>
</feature>
<feature type="helix" evidence="6">
    <location>
        <begin position="81"/>
        <end position="93"/>
    </location>
</feature>
<feature type="strand" evidence="6">
    <location>
        <begin position="97"/>
        <end position="104"/>
    </location>
</feature>
<feature type="helix" evidence="6">
    <location>
        <begin position="105"/>
        <end position="123"/>
    </location>
</feature>
<feature type="strand" evidence="6">
    <location>
        <begin position="130"/>
        <end position="134"/>
    </location>
</feature>
<feature type="helix" evidence="6">
    <location>
        <begin position="143"/>
        <end position="148"/>
    </location>
</feature>
<feature type="helix" evidence="6">
    <location>
        <begin position="152"/>
        <end position="154"/>
    </location>
</feature>
<feature type="helix" evidence="6">
    <location>
        <begin position="156"/>
        <end position="158"/>
    </location>
</feature>
<feature type="strand" evidence="6">
    <location>
        <begin position="163"/>
        <end position="168"/>
    </location>
</feature>
<feature type="helix" evidence="6">
    <location>
        <begin position="173"/>
        <end position="177"/>
    </location>
</feature>
<feature type="strand" evidence="6">
    <location>
        <begin position="184"/>
        <end position="189"/>
    </location>
</feature>
<feature type="strand" evidence="6">
    <location>
        <begin position="191"/>
        <end position="193"/>
    </location>
</feature>
<feature type="turn" evidence="6">
    <location>
        <begin position="194"/>
        <end position="197"/>
    </location>
</feature>
<feature type="strand" evidence="6">
    <location>
        <begin position="198"/>
        <end position="200"/>
    </location>
</feature>
<feature type="helix" evidence="6">
    <location>
        <begin position="203"/>
        <end position="215"/>
    </location>
</feature>
<feature type="strand" evidence="6">
    <location>
        <begin position="219"/>
        <end position="223"/>
    </location>
</feature>
<feature type="turn" evidence="6">
    <location>
        <begin position="225"/>
        <end position="232"/>
    </location>
</feature>
<feature type="strand" evidence="6">
    <location>
        <begin position="233"/>
        <end position="236"/>
    </location>
</feature>
<feature type="helix" evidence="6">
    <location>
        <begin position="237"/>
        <end position="241"/>
    </location>
</feature>
<feature type="strand" evidence="6">
    <location>
        <begin position="246"/>
        <end position="250"/>
    </location>
</feature>
<feature type="helix" evidence="6">
    <location>
        <begin position="252"/>
        <end position="255"/>
    </location>
</feature>
<feature type="strand" evidence="6">
    <location>
        <begin position="261"/>
        <end position="265"/>
    </location>
</feature>
<feature type="helix" evidence="6">
    <location>
        <begin position="267"/>
        <end position="271"/>
    </location>
</feature>
<feature type="helix" evidence="6">
    <location>
        <begin position="286"/>
        <end position="299"/>
    </location>
</feature>
<feature type="helix" evidence="6">
    <location>
        <begin position="302"/>
        <end position="326"/>
    </location>
</feature>
<feature type="strand" evidence="6">
    <location>
        <begin position="329"/>
        <end position="335"/>
    </location>
</feature>
<feature type="strand" evidence="6">
    <location>
        <begin position="338"/>
        <end position="343"/>
    </location>
</feature>
<feature type="turn" evidence="6">
    <location>
        <begin position="345"/>
        <end position="349"/>
    </location>
</feature>
<feature type="helix" evidence="6">
    <location>
        <begin position="351"/>
        <end position="360"/>
    </location>
</feature>
<feature type="strand" evidence="6">
    <location>
        <begin position="366"/>
        <end position="369"/>
    </location>
</feature>
<feature type="strand" evidence="6">
    <location>
        <begin position="372"/>
        <end position="375"/>
    </location>
</feature>
<feature type="helix" evidence="6">
    <location>
        <begin position="383"/>
        <end position="401"/>
    </location>
</feature>
<keyword id="KW-0002">3D-structure</keyword>
<keyword id="KW-0032">Aminotransferase</keyword>
<keyword id="KW-0056">Arginine metabolism</keyword>
<keyword id="KW-0903">Direct protein sequencing</keyword>
<keyword id="KW-0663">Pyridoxal phosphate</keyword>
<keyword id="KW-1185">Reference proteome</keyword>
<keyword id="KW-0808">Transferase</keyword>
<name>ASTC_ECOLI</name>
<accession>P77581</accession>
<gene>
    <name evidence="3" type="primary">astC</name>
    <name type="synonym">argM</name>
    <name type="synonym">cstC</name>
    <name type="synonym">ydjW</name>
    <name type="ordered locus">b1748</name>
    <name type="ordered locus">JW1737</name>
</gene>
<protein>
    <recommendedName>
        <fullName>Succinylornithine transaminase</fullName>
        <shortName>SOAT</shortName>
        <ecNumber evidence="5">2.6.1.81</ecNumber>
    </recommendedName>
    <alternativeName>
        <fullName>Carbon starvation protein C</fullName>
    </alternativeName>
    <alternativeName>
        <fullName>Succinylornithine aminotransferase</fullName>
    </alternativeName>
</protein>
<sequence length="406" mass="43665">MSQPITRENFDEWMIPVYAPAPFIPVRGEGSRLWDQQGKEYIDFAGGIAVNALGHAHPELREALNEQASKFWHTGNGYTNEPVLRLAKKLIDATFADRVFFCNSGAEANEAALKLARKFAHDRYGSHKSGIVAFKNAFHGRTLFTVSAGGQPAYSQDFAPLPADIRHAAYNDINSASALIDDSTCAVIVEPIQGEGGVVPASNAFLQGLRELCNRHNALLIFDEVQTGVGRTGELYAYMHYGVTPDLLTTAKALGGGFPVGALLATEECARVMTVGTHGTTYGGNPLASAVAGKVLELINTPEMLNGVKQRHDWFVERLNTINHRYGLFSEVRGLGLLIGCVLNADYAGQAKQISQEAAKAGVMVLIAGGNVVRFAPALNVSEEEVTTGLDRFAAACEHFVSRGSS</sequence>
<proteinExistence type="evidence at protein level"/>
<comment type="function">
    <text evidence="2">Catalyzes the transamination of N(2)-succinylornithine and alpha-ketoglutarate into N(2)-succinylglutamate semialdehyde and glutamate. Can also act as an acetylornithine aminotransferase. Is involved in the utilization of arginine as a nitrogen source, via the AST pathway, and also seems to play a role in ornithine catabolism (PubMed:9696779).</text>
</comment>
<comment type="catalytic activity">
    <reaction evidence="5">
        <text>N(2)-succinyl-L-ornithine + 2-oxoglutarate = N-succinyl-L-glutamate 5-semialdehyde + L-glutamate</text>
        <dbReference type="Rhea" id="RHEA:16953"/>
        <dbReference type="ChEBI" id="CHEBI:16810"/>
        <dbReference type="ChEBI" id="CHEBI:29985"/>
        <dbReference type="ChEBI" id="CHEBI:58514"/>
        <dbReference type="ChEBI" id="CHEBI:58520"/>
        <dbReference type="EC" id="2.6.1.81"/>
    </reaction>
    <physiologicalReaction direction="left-to-right" evidence="2">
        <dbReference type="Rhea" id="RHEA:16954"/>
    </physiologicalReaction>
</comment>
<comment type="cofactor">
    <cofactor>
        <name>pyridoxal 5'-phosphate</name>
        <dbReference type="ChEBI" id="CHEBI:597326"/>
    </cofactor>
</comment>
<comment type="pathway">
    <text evidence="2">Amino-acid degradation; L-arginine degradation via AST pathway; L-glutamate and succinate from L-arginine: step 3/5.</text>
</comment>
<comment type="induction">
    <text evidence="2">Its expression is under nitrogen control; a nitrogen-limited medium highly increases succinylornithine transaminase activity.</text>
</comment>
<comment type="disruption phenotype">
    <text evidence="2">Cells lacking this gene lose the ability to grow on arginine as the nitrogen source. The disruption of this gene also impairs ornithine catabolism.</text>
</comment>
<comment type="similarity">
    <text evidence="4">Belongs to the class-III pyridoxal-phosphate-dependent aminotransferase family. AstC subfamily.</text>
</comment>
<reference key="1">
    <citation type="journal article" date="1998" name="J. Bacteriol.">
        <title>The Escherichia coli starvation gene cstC is involved in amino acid catabolism.</title>
        <authorList>
            <person name="Fraley C.D."/>
            <person name="Kim J.H."/>
            <person name="McCann M.P."/>
            <person name="Matin A."/>
        </authorList>
    </citation>
    <scope>NUCLEOTIDE SEQUENCE [GENOMIC DNA]</scope>
</reference>
<reference key="2">
    <citation type="journal article" date="1996" name="DNA Res.">
        <title>A 570-kb DNA sequence of the Escherichia coli K-12 genome corresponding to the 28.0-40.1 min region on the linkage map.</title>
        <authorList>
            <person name="Aiba H."/>
            <person name="Baba T."/>
            <person name="Fujita K."/>
            <person name="Hayashi K."/>
            <person name="Inada T."/>
            <person name="Isono K."/>
            <person name="Itoh T."/>
            <person name="Kasai H."/>
            <person name="Kashimoto K."/>
            <person name="Kimura S."/>
            <person name="Kitakawa M."/>
            <person name="Kitagawa M."/>
            <person name="Makino K."/>
            <person name="Miki T."/>
            <person name="Mizobuchi K."/>
            <person name="Mori H."/>
            <person name="Mori T."/>
            <person name="Motomura K."/>
            <person name="Nakade S."/>
            <person name="Nakamura Y."/>
            <person name="Nashimoto H."/>
            <person name="Nishio Y."/>
            <person name="Oshima T."/>
            <person name="Saito N."/>
            <person name="Sampei G."/>
            <person name="Seki Y."/>
            <person name="Sivasundaram S."/>
            <person name="Tagami H."/>
            <person name="Takeda J."/>
            <person name="Takemoto K."/>
            <person name="Takeuchi Y."/>
            <person name="Wada C."/>
            <person name="Yamamoto Y."/>
            <person name="Horiuchi T."/>
        </authorList>
    </citation>
    <scope>NUCLEOTIDE SEQUENCE [LARGE SCALE GENOMIC DNA]</scope>
    <source>
        <strain>K12 / W3110 / ATCC 27325 / DSM 5911</strain>
    </source>
</reference>
<reference key="3">
    <citation type="journal article" date="1997" name="Science">
        <title>The complete genome sequence of Escherichia coli K-12.</title>
        <authorList>
            <person name="Blattner F.R."/>
            <person name="Plunkett G. III"/>
            <person name="Bloch C.A."/>
            <person name="Perna N.T."/>
            <person name="Burland V."/>
            <person name="Riley M."/>
            <person name="Collado-Vides J."/>
            <person name="Glasner J.D."/>
            <person name="Rode C.K."/>
            <person name="Mayhew G.F."/>
            <person name="Gregor J."/>
            <person name="Davis N.W."/>
            <person name="Kirkpatrick H.A."/>
            <person name="Goeden M.A."/>
            <person name="Rose D.J."/>
            <person name="Mau B."/>
            <person name="Shao Y."/>
        </authorList>
    </citation>
    <scope>NUCLEOTIDE SEQUENCE [LARGE SCALE GENOMIC DNA]</scope>
    <source>
        <strain>K12 / MG1655 / ATCC 47076</strain>
    </source>
</reference>
<reference key="4">
    <citation type="journal article" date="2006" name="Mol. Syst. Biol.">
        <title>Highly accurate genome sequences of Escherichia coli K-12 strains MG1655 and W3110.</title>
        <authorList>
            <person name="Hayashi K."/>
            <person name="Morooka N."/>
            <person name="Yamamoto Y."/>
            <person name="Fujita K."/>
            <person name="Isono K."/>
            <person name="Choi S."/>
            <person name="Ohtsubo E."/>
            <person name="Baba T."/>
            <person name="Wanner B.L."/>
            <person name="Mori H."/>
            <person name="Horiuchi T."/>
        </authorList>
    </citation>
    <scope>NUCLEOTIDE SEQUENCE [LARGE SCALE GENOMIC DNA]</scope>
    <source>
        <strain>K12 / W3110 / ATCC 27325 / DSM 5911</strain>
    </source>
</reference>
<reference key="5">
    <citation type="journal article" date="1998" name="J. Bacteriol.">
        <title>Arginine catabolism and the arginine succinyltransferase pathway in Escherichia coli.</title>
        <authorList>
            <person name="Schneider B.L."/>
            <person name="Kiupakis A.K."/>
            <person name="Reitzer L.J."/>
        </authorList>
    </citation>
    <scope>PROTEIN SEQUENCE OF 3-21 AND 295-309</scope>
    <scope>FUNCTION</scope>
    <scope>CATALYTIC ACTIVITY</scope>
    <scope>DISRUPTION PHENOTYPE</scope>
    <scope>PATHWAY</scope>
    <scope>INDUCTION</scope>
</reference>
<dbReference type="EC" id="2.6.1.81" evidence="5"/>
<dbReference type="EMBL" id="U90416">
    <property type="protein sequence ID" value="AAB51148.1"/>
    <property type="molecule type" value="Genomic_DNA"/>
</dbReference>
<dbReference type="EMBL" id="U00096">
    <property type="protein sequence ID" value="AAC74818.1"/>
    <property type="molecule type" value="Genomic_DNA"/>
</dbReference>
<dbReference type="EMBL" id="AP009048">
    <property type="protein sequence ID" value="BAA15539.1"/>
    <property type="molecule type" value="Genomic_DNA"/>
</dbReference>
<dbReference type="PIR" id="D64934">
    <property type="entry name" value="D64934"/>
</dbReference>
<dbReference type="RefSeq" id="NP_416262.1">
    <property type="nucleotide sequence ID" value="NC_000913.3"/>
</dbReference>
<dbReference type="RefSeq" id="WP_000081983.1">
    <property type="nucleotide sequence ID" value="NZ_STEB01000009.1"/>
</dbReference>
<dbReference type="PDB" id="4ADB">
    <property type="method" value="X-ray"/>
    <property type="resolution" value="2.20 A"/>
    <property type="chains" value="A/B/C/D=1-406"/>
</dbReference>
<dbReference type="PDB" id="4ADC">
    <property type="method" value="X-ray"/>
    <property type="resolution" value="2.30 A"/>
    <property type="chains" value="A/B/C/D=1-406"/>
</dbReference>
<dbReference type="PDB" id="4ADD">
    <property type="method" value="X-ray"/>
    <property type="resolution" value="2.45 A"/>
    <property type="chains" value="A/B/C/D=1-406"/>
</dbReference>
<dbReference type="PDB" id="4ADE">
    <property type="method" value="X-ray"/>
    <property type="resolution" value="2.75 A"/>
    <property type="chains" value="A/B=1-406"/>
</dbReference>
<dbReference type="PDBsum" id="4ADB"/>
<dbReference type="PDBsum" id="4ADC"/>
<dbReference type="PDBsum" id="4ADD"/>
<dbReference type="PDBsum" id="4ADE"/>
<dbReference type="SMR" id="P77581"/>
<dbReference type="BioGRID" id="4263005">
    <property type="interactions" value="24"/>
</dbReference>
<dbReference type="BioGRID" id="850615">
    <property type="interactions" value="1"/>
</dbReference>
<dbReference type="DIP" id="DIP-9145N"/>
<dbReference type="FunCoup" id="P77581">
    <property type="interactions" value="690"/>
</dbReference>
<dbReference type="IntAct" id="P77581">
    <property type="interactions" value="2"/>
</dbReference>
<dbReference type="STRING" id="511145.b1748"/>
<dbReference type="jPOST" id="P77581"/>
<dbReference type="PaxDb" id="511145-b1748"/>
<dbReference type="EnsemblBacteria" id="AAC74818">
    <property type="protein sequence ID" value="AAC74818"/>
    <property type="gene ID" value="b1748"/>
</dbReference>
<dbReference type="GeneID" id="75203054"/>
<dbReference type="GeneID" id="946255"/>
<dbReference type="KEGG" id="ecj:JW1737"/>
<dbReference type="KEGG" id="eco:b1748"/>
<dbReference type="KEGG" id="ecoc:C3026_09985"/>
<dbReference type="PATRIC" id="fig|1411691.4.peg.508"/>
<dbReference type="EchoBASE" id="EB3755"/>
<dbReference type="eggNOG" id="COG4992">
    <property type="taxonomic scope" value="Bacteria"/>
</dbReference>
<dbReference type="HOGENOM" id="CLU_016922_10_1_6"/>
<dbReference type="InParanoid" id="P77581"/>
<dbReference type="OMA" id="RSAWDLC"/>
<dbReference type="OrthoDB" id="9801052at2"/>
<dbReference type="PhylomeDB" id="P77581"/>
<dbReference type="BioCyc" id="EcoCyc:SUCCORNTRANSAM-MONOMER"/>
<dbReference type="BioCyc" id="MetaCyc:SUCCORNTRANSAM-MONOMER"/>
<dbReference type="UniPathway" id="UPA00185">
    <property type="reaction ID" value="UER00281"/>
</dbReference>
<dbReference type="EvolutionaryTrace" id="P77581"/>
<dbReference type="PRO" id="PR:P77581"/>
<dbReference type="Proteomes" id="UP000000625">
    <property type="component" value="Chromosome"/>
</dbReference>
<dbReference type="GO" id="GO:0042802">
    <property type="term" value="F:identical protein binding"/>
    <property type="evidence" value="ECO:0000318"/>
    <property type="project" value="GO_Central"/>
</dbReference>
<dbReference type="GO" id="GO:0003992">
    <property type="term" value="F:N2-acetyl-L-ornithine:2-oxoglutarate 5-aminotransferase activity"/>
    <property type="evidence" value="ECO:0000314"/>
    <property type="project" value="EcoCyc"/>
</dbReference>
<dbReference type="GO" id="GO:0030170">
    <property type="term" value="F:pyridoxal phosphate binding"/>
    <property type="evidence" value="ECO:0000318"/>
    <property type="project" value="GO_Central"/>
</dbReference>
<dbReference type="GO" id="GO:0043825">
    <property type="term" value="F:succinylornithine transaminase activity"/>
    <property type="evidence" value="ECO:0000314"/>
    <property type="project" value="EcoliWiki"/>
</dbReference>
<dbReference type="GO" id="GO:0042450">
    <property type="term" value="P:arginine biosynthetic process via ornithine"/>
    <property type="evidence" value="ECO:0000316"/>
    <property type="project" value="EcoCyc"/>
</dbReference>
<dbReference type="GO" id="GO:0006527">
    <property type="term" value="P:arginine catabolic process"/>
    <property type="evidence" value="ECO:0000315"/>
    <property type="project" value="EcoliWiki"/>
</dbReference>
<dbReference type="GO" id="GO:0019544">
    <property type="term" value="P:arginine catabolic process to glutamate"/>
    <property type="evidence" value="ECO:0007669"/>
    <property type="project" value="UniProtKB-UniRule"/>
</dbReference>
<dbReference type="GO" id="GO:0019545">
    <property type="term" value="P:arginine catabolic process to succinate"/>
    <property type="evidence" value="ECO:0000315"/>
    <property type="project" value="EcoCyc"/>
</dbReference>
<dbReference type="GO" id="GO:0006593">
    <property type="term" value="P:ornithine catabolic process"/>
    <property type="evidence" value="ECO:0000315"/>
    <property type="project" value="EcoliWiki"/>
</dbReference>
<dbReference type="CDD" id="cd00610">
    <property type="entry name" value="OAT_like"/>
    <property type="match status" value="1"/>
</dbReference>
<dbReference type="FunFam" id="3.40.640.10:FF:000004">
    <property type="entry name" value="Acetylornithine aminotransferase"/>
    <property type="match status" value="1"/>
</dbReference>
<dbReference type="FunFam" id="3.90.1150.10:FF:000009">
    <property type="entry name" value="Succinylornithine transaminase"/>
    <property type="match status" value="1"/>
</dbReference>
<dbReference type="Gene3D" id="3.90.1150.10">
    <property type="entry name" value="Aspartate Aminotransferase, domain 1"/>
    <property type="match status" value="1"/>
</dbReference>
<dbReference type="Gene3D" id="3.40.640.10">
    <property type="entry name" value="Type I PLP-dependent aspartate aminotransferase-like (Major domain)"/>
    <property type="match status" value="1"/>
</dbReference>
<dbReference type="HAMAP" id="MF_01107">
    <property type="entry name" value="ArgD_aminotrans_3"/>
    <property type="match status" value="1"/>
</dbReference>
<dbReference type="HAMAP" id="MF_01173">
    <property type="entry name" value="AstC_aminotrans_3"/>
    <property type="match status" value="1"/>
</dbReference>
<dbReference type="InterPro" id="IPR017652">
    <property type="entry name" value="Ac/SucOrn_transaminase_bac"/>
</dbReference>
<dbReference type="InterPro" id="IPR004636">
    <property type="entry name" value="AcOrn/SuccOrn_fam"/>
</dbReference>
<dbReference type="InterPro" id="IPR005814">
    <property type="entry name" value="Aminotrans_3"/>
</dbReference>
<dbReference type="InterPro" id="IPR049704">
    <property type="entry name" value="Aminotrans_3_PPA_site"/>
</dbReference>
<dbReference type="InterPro" id="IPR050103">
    <property type="entry name" value="Class-III_PLP-dep_AT"/>
</dbReference>
<dbReference type="InterPro" id="IPR015424">
    <property type="entry name" value="PyrdxlP-dep_Trfase"/>
</dbReference>
<dbReference type="InterPro" id="IPR015421">
    <property type="entry name" value="PyrdxlP-dep_Trfase_major"/>
</dbReference>
<dbReference type="InterPro" id="IPR015422">
    <property type="entry name" value="PyrdxlP-dep_Trfase_small"/>
</dbReference>
<dbReference type="InterPro" id="IPR026330">
    <property type="entry name" value="SOAT"/>
</dbReference>
<dbReference type="NCBIfam" id="TIGR03246">
    <property type="entry name" value="arg_catab_astC"/>
    <property type="match status" value="1"/>
</dbReference>
<dbReference type="NCBIfam" id="TIGR00707">
    <property type="entry name" value="argD"/>
    <property type="match status" value="1"/>
</dbReference>
<dbReference type="NCBIfam" id="NF002325">
    <property type="entry name" value="PRK01278.1"/>
    <property type="match status" value="1"/>
</dbReference>
<dbReference type="NCBIfam" id="NF003468">
    <property type="entry name" value="PRK05093.1"/>
    <property type="match status" value="1"/>
</dbReference>
<dbReference type="NCBIfam" id="NF009047">
    <property type="entry name" value="PRK12381.1"/>
    <property type="match status" value="1"/>
</dbReference>
<dbReference type="PANTHER" id="PTHR11986">
    <property type="entry name" value="AMINOTRANSFERASE CLASS III"/>
    <property type="match status" value="1"/>
</dbReference>
<dbReference type="PANTHER" id="PTHR11986:SF113">
    <property type="entry name" value="SUCCINYLORNITHINE TRANSAMINASE"/>
    <property type="match status" value="1"/>
</dbReference>
<dbReference type="Pfam" id="PF00202">
    <property type="entry name" value="Aminotran_3"/>
    <property type="match status" value="1"/>
</dbReference>
<dbReference type="PIRSF" id="PIRSF000521">
    <property type="entry name" value="Transaminase_4ab_Lys_Orn"/>
    <property type="match status" value="1"/>
</dbReference>
<dbReference type="SUPFAM" id="SSF53383">
    <property type="entry name" value="PLP-dependent transferases"/>
    <property type="match status" value="1"/>
</dbReference>
<dbReference type="PROSITE" id="PS00600">
    <property type="entry name" value="AA_TRANSFER_CLASS_3"/>
    <property type="match status" value="1"/>
</dbReference>
<evidence type="ECO:0000250" key="1"/>
<evidence type="ECO:0000269" key="2">
    <source>
    </source>
</evidence>
<evidence type="ECO:0000303" key="3">
    <source>
    </source>
</evidence>
<evidence type="ECO:0000305" key="4"/>
<evidence type="ECO:0000305" key="5">
    <source>
    </source>
</evidence>
<evidence type="ECO:0007829" key="6">
    <source>
        <dbReference type="PDB" id="4ADB"/>
    </source>
</evidence>